<keyword id="KW-1185">Reference proteome</keyword>
<keyword id="KW-0678">Repressor</keyword>
<keyword id="KW-0687">Ribonucleoprotein</keyword>
<keyword id="KW-0689">Ribosomal protein</keyword>
<keyword id="KW-0694">RNA-binding</keyword>
<keyword id="KW-0699">rRNA-binding</keyword>
<keyword id="KW-0810">Translation regulation</keyword>
<keyword id="KW-0820">tRNA-binding</keyword>
<name>RL1_CELJU</name>
<proteinExistence type="inferred from homology"/>
<protein>
    <recommendedName>
        <fullName evidence="1">Large ribosomal subunit protein uL1</fullName>
    </recommendedName>
    <alternativeName>
        <fullName evidence="2">50S ribosomal protein L1</fullName>
    </alternativeName>
</protein>
<gene>
    <name evidence="1" type="primary">rplA</name>
    <name type="ordered locus">CJA_0689</name>
</gene>
<sequence length="231" mass="24211">MAKLTKRQRAINEKVDGSKQYSIDDAVALLKELSNVKFAETVDVSINLGIDPRKSDQSVRGATTLPHGNGKDVRVAVFTQGANAEAAKAAGAEFVGMDELAAEIKAGKMDFDVVIASPDAMRVVGQLGQVLGPRGLMPNPKTGTVTPDVVTAVKNAKAGQVRYRAEKGGIIHGGIGKISFETVALKENLEALISDLKKAKPASSKGVYLKKVTLSTTMGPGLVIDQSSLAV</sequence>
<dbReference type="EMBL" id="CP000934">
    <property type="protein sequence ID" value="ACE85125.1"/>
    <property type="molecule type" value="Genomic_DNA"/>
</dbReference>
<dbReference type="RefSeq" id="WP_012486354.1">
    <property type="nucleotide sequence ID" value="NC_010995.1"/>
</dbReference>
<dbReference type="SMR" id="B3PK27"/>
<dbReference type="STRING" id="498211.CJA_0689"/>
<dbReference type="KEGG" id="cja:CJA_0689"/>
<dbReference type="eggNOG" id="COG0081">
    <property type="taxonomic scope" value="Bacteria"/>
</dbReference>
<dbReference type="HOGENOM" id="CLU_062853_0_0_6"/>
<dbReference type="OrthoDB" id="9803740at2"/>
<dbReference type="Proteomes" id="UP000001036">
    <property type="component" value="Chromosome"/>
</dbReference>
<dbReference type="GO" id="GO:0022625">
    <property type="term" value="C:cytosolic large ribosomal subunit"/>
    <property type="evidence" value="ECO:0007669"/>
    <property type="project" value="TreeGrafter"/>
</dbReference>
<dbReference type="GO" id="GO:0019843">
    <property type="term" value="F:rRNA binding"/>
    <property type="evidence" value="ECO:0007669"/>
    <property type="project" value="UniProtKB-UniRule"/>
</dbReference>
<dbReference type="GO" id="GO:0003735">
    <property type="term" value="F:structural constituent of ribosome"/>
    <property type="evidence" value="ECO:0007669"/>
    <property type="project" value="InterPro"/>
</dbReference>
<dbReference type="GO" id="GO:0000049">
    <property type="term" value="F:tRNA binding"/>
    <property type="evidence" value="ECO:0007669"/>
    <property type="project" value="UniProtKB-KW"/>
</dbReference>
<dbReference type="GO" id="GO:0006417">
    <property type="term" value="P:regulation of translation"/>
    <property type="evidence" value="ECO:0007669"/>
    <property type="project" value="UniProtKB-KW"/>
</dbReference>
<dbReference type="GO" id="GO:0006412">
    <property type="term" value="P:translation"/>
    <property type="evidence" value="ECO:0007669"/>
    <property type="project" value="UniProtKB-UniRule"/>
</dbReference>
<dbReference type="CDD" id="cd00403">
    <property type="entry name" value="Ribosomal_L1"/>
    <property type="match status" value="1"/>
</dbReference>
<dbReference type="FunFam" id="3.40.50.790:FF:000001">
    <property type="entry name" value="50S ribosomal protein L1"/>
    <property type="match status" value="1"/>
</dbReference>
<dbReference type="Gene3D" id="3.30.190.20">
    <property type="match status" value="1"/>
</dbReference>
<dbReference type="Gene3D" id="3.40.50.790">
    <property type="match status" value="1"/>
</dbReference>
<dbReference type="HAMAP" id="MF_01318_B">
    <property type="entry name" value="Ribosomal_uL1_B"/>
    <property type="match status" value="1"/>
</dbReference>
<dbReference type="InterPro" id="IPR005878">
    <property type="entry name" value="Ribosom_uL1_bac-type"/>
</dbReference>
<dbReference type="InterPro" id="IPR002143">
    <property type="entry name" value="Ribosomal_uL1"/>
</dbReference>
<dbReference type="InterPro" id="IPR023674">
    <property type="entry name" value="Ribosomal_uL1-like"/>
</dbReference>
<dbReference type="InterPro" id="IPR028364">
    <property type="entry name" value="Ribosomal_uL1/biogenesis"/>
</dbReference>
<dbReference type="InterPro" id="IPR016095">
    <property type="entry name" value="Ribosomal_uL1_3-a/b-sand"/>
</dbReference>
<dbReference type="InterPro" id="IPR023673">
    <property type="entry name" value="Ribosomal_uL1_CS"/>
</dbReference>
<dbReference type="NCBIfam" id="TIGR01169">
    <property type="entry name" value="rplA_bact"/>
    <property type="match status" value="1"/>
</dbReference>
<dbReference type="PANTHER" id="PTHR36427">
    <property type="entry name" value="54S RIBOSOMAL PROTEIN L1, MITOCHONDRIAL"/>
    <property type="match status" value="1"/>
</dbReference>
<dbReference type="PANTHER" id="PTHR36427:SF3">
    <property type="entry name" value="LARGE RIBOSOMAL SUBUNIT PROTEIN UL1M"/>
    <property type="match status" value="1"/>
</dbReference>
<dbReference type="Pfam" id="PF00687">
    <property type="entry name" value="Ribosomal_L1"/>
    <property type="match status" value="1"/>
</dbReference>
<dbReference type="PIRSF" id="PIRSF002155">
    <property type="entry name" value="Ribosomal_L1"/>
    <property type="match status" value="1"/>
</dbReference>
<dbReference type="SUPFAM" id="SSF56808">
    <property type="entry name" value="Ribosomal protein L1"/>
    <property type="match status" value="1"/>
</dbReference>
<dbReference type="PROSITE" id="PS01199">
    <property type="entry name" value="RIBOSOMAL_L1"/>
    <property type="match status" value="1"/>
</dbReference>
<evidence type="ECO:0000255" key="1">
    <source>
        <dbReference type="HAMAP-Rule" id="MF_01318"/>
    </source>
</evidence>
<evidence type="ECO:0000305" key="2"/>
<feature type="chain" id="PRO_1000141376" description="Large ribosomal subunit protein uL1">
    <location>
        <begin position="1"/>
        <end position="231"/>
    </location>
</feature>
<organism>
    <name type="scientific">Cellvibrio japonicus (strain Ueda107)</name>
    <name type="common">Pseudomonas fluorescens subsp. cellulosa</name>
    <dbReference type="NCBI Taxonomy" id="498211"/>
    <lineage>
        <taxon>Bacteria</taxon>
        <taxon>Pseudomonadati</taxon>
        <taxon>Pseudomonadota</taxon>
        <taxon>Gammaproteobacteria</taxon>
        <taxon>Cellvibrionales</taxon>
        <taxon>Cellvibrionaceae</taxon>
        <taxon>Cellvibrio</taxon>
    </lineage>
</organism>
<comment type="function">
    <text evidence="1">Binds directly to 23S rRNA. The L1 stalk is quite mobile in the ribosome, and is involved in E site tRNA release.</text>
</comment>
<comment type="function">
    <text evidence="1">Protein L1 is also a translational repressor protein, it controls the translation of the L11 operon by binding to its mRNA.</text>
</comment>
<comment type="subunit">
    <text evidence="1">Part of the 50S ribosomal subunit.</text>
</comment>
<comment type="similarity">
    <text evidence="1">Belongs to the universal ribosomal protein uL1 family.</text>
</comment>
<accession>B3PK27</accession>
<reference key="1">
    <citation type="journal article" date="2008" name="J. Bacteriol.">
        <title>Insights into plant cell wall degradation from the genome sequence of the soil bacterium Cellvibrio japonicus.</title>
        <authorList>
            <person name="DeBoy R.T."/>
            <person name="Mongodin E.F."/>
            <person name="Fouts D.E."/>
            <person name="Tailford L.E."/>
            <person name="Khouri H."/>
            <person name="Emerson J.B."/>
            <person name="Mohamoud Y."/>
            <person name="Watkins K."/>
            <person name="Henrissat B."/>
            <person name="Gilbert H.J."/>
            <person name="Nelson K.E."/>
        </authorList>
    </citation>
    <scope>NUCLEOTIDE SEQUENCE [LARGE SCALE GENOMIC DNA]</scope>
    <source>
        <strain>Ueda107</strain>
    </source>
</reference>